<keyword id="KW-0066">ATP synthesis</keyword>
<keyword id="KW-0067">ATP-binding</keyword>
<keyword id="KW-1003">Cell membrane</keyword>
<keyword id="KW-0139">CF(1)</keyword>
<keyword id="KW-0375">Hydrogen ion transport</keyword>
<keyword id="KW-0406">Ion transport</keyword>
<keyword id="KW-0472">Membrane</keyword>
<keyword id="KW-0547">Nucleotide-binding</keyword>
<keyword id="KW-1185">Reference proteome</keyword>
<keyword id="KW-1278">Translocase</keyword>
<keyword id="KW-0813">Transport</keyword>
<accession>Q8FQ20</accession>
<sequence length="481" mass="52072">MTTALTEQNAQQAATAGRVVRVIGAVVDVEFPRGELPALYNALTAEVTLESVAKTVVLEVAQHLGDNLIRTIAMAPTDGMVRGATVTDTGKPISVPVGDVVKGHVFNALGDCLDVPGLGRDGEQWGIHREPPSFDQLEGKTEILETGIKVIDLLTPYVKGGKIGLFGGAGVGKTVLIQEMITRIAREFSGTSVFAGVGERTREGTDLFLEMEEMGVLQDTALVFGQMDEPPGVRMRVALSGLTMAEYFRDVQNQDVLLFIDNIFRFTQAGSEVSTLLGRMPSAVGYQPTLADEMGVLQERITSTKGRSITSLQAVYVPADDYTDPAPATTFAHLDATTELDRSIASKGIYPAVNPLTSTSRILEPSIVGERHYEVSQRVIGILQKNKELQDIIAILGMDELSEEDKITVARARRLERFLGQNFFVAEKFTGLPGSYVPLADTIDAFERICNGDFDHYPEQAFNGLGGLDDVEAAYKKLTGK</sequence>
<protein>
    <recommendedName>
        <fullName evidence="1">ATP synthase subunit beta</fullName>
        <ecNumber evidence="1">7.1.2.2</ecNumber>
    </recommendedName>
    <alternativeName>
        <fullName evidence="1">ATP synthase F1 sector subunit beta</fullName>
    </alternativeName>
    <alternativeName>
        <fullName evidence="1">F-ATPase subunit beta</fullName>
    </alternativeName>
</protein>
<reference key="1">
    <citation type="journal article" date="2003" name="Genome Res.">
        <title>Comparative complete genome sequence analysis of the amino acid replacements responsible for the thermostability of Corynebacterium efficiens.</title>
        <authorList>
            <person name="Nishio Y."/>
            <person name="Nakamura Y."/>
            <person name="Kawarabayasi Y."/>
            <person name="Usuda Y."/>
            <person name="Kimura E."/>
            <person name="Sugimoto S."/>
            <person name="Matsui K."/>
            <person name="Yamagishi A."/>
            <person name="Kikuchi H."/>
            <person name="Ikeo K."/>
            <person name="Gojobori T."/>
        </authorList>
    </citation>
    <scope>NUCLEOTIDE SEQUENCE [LARGE SCALE GENOMIC DNA]</scope>
    <source>
        <strain>DSM 44549 / YS-314 / AJ 12310 / JCM 11189 / NBRC 100395</strain>
    </source>
</reference>
<gene>
    <name evidence="1" type="primary">atpD</name>
    <name type="ordered locus">CE1315</name>
</gene>
<dbReference type="EC" id="7.1.2.2" evidence="1"/>
<dbReference type="EMBL" id="BA000035">
    <property type="protein sequence ID" value="BAC18125.1"/>
    <property type="molecule type" value="Genomic_DNA"/>
</dbReference>
<dbReference type="RefSeq" id="WP_006769276.1">
    <property type="nucleotide sequence ID" value="NC_004369.1"/>
</dbReference>
<dbReference type="SMR" id="Q8FQ20"/>
<dbReference type="STRING" id="196164.gene:10741724"/>
<dbReference type="KEGG" id="cef:CE1315"/>
<dbReference type="eggNOG" id="COG0055">
    <property type="taxonomic scope" value="Bacteria"/>
</dbReference>
<dbReference type="HOGENOM" id="CLU_022398_0_2_11"/>
<dbReference type="OrthoDB" id="9801639at2"/>
<dbReference type="Proteomes" id="UP000001409">
    <property type="component" value="Chromosome"/>
</dbReference>
<dbReference type="GO" id="GO:0005886">
    <property type="term" value="C:plasma membrane"/>
    <property type="evidence" value="ECO:0007669"/>
    <property type="project" value="UniProtKB-SubCell"/>
</dbReference>
<dbReference type="GO" id="GO:0045259">
    <property type="term" value="C:proton-transporting ATP synthase complex"/>
    <property type="evidence" value="ECO:0007669"/>
    <property type="project" value="UniProtKB-KW"/>
</dbReference>
<dbReference type="GO" id="GO:0005524">
    <property type="term" value="F:ATP binding"/>
    <property type="evidence" value="ECO:0007669"/>
    <property type="project" value="UniProtKB-UniRule"/>
</dbReference>
<dbReference type="GO" id="GO:0016887">
    <property type="term" value="F:ATP hydrolysis activity"/>
    <property type="evidence" value="ECO:0007669"/>
    <property type="project" value="InterPro"/>
</dbReference>
<dbReference type="GO" id="GO:0046933">
    <property type="term" value="F:proton-transporting ATP synthase activity, rotational mechanism"/>
    <property type="evidence" value="ECO:0007669"/>
    <property type="project" value="UniProtKB-UniRule"/>
</dbReference>
<dbReference type="CDD" id="cd18110">
    <property type="entry name" value="ATP-synt_F1_beta_C"/>
    <property type="match status" value="1"/>
</dbReference>
<dbReference type="CDD" id="cd18115">
    <property type="entry name" value="ATP-synt_F1_beta_N"/>
    <property type="match status" value="1"/>
</dbReference>
<dbReference type="CDD" id="cd01133">
    <property type="entry name" value="F1-ATPase_beta_CD"/>
    <property type="match status" value="1"/>
</dbReference>
<dbReference type="FunFam" id="1.10.1140.10:FF:000005">
    <property type="entry name" value="ATP synthase subunit beta"/>
    <property type="match status" value="1"/>
</dbReference>
<dbReference type="FunFam" id="2.40.10.170:FF:000005">
    <property type="entry name" value="ATP synthase subunit beta"/>
    <property type="match status" value="1"/>
</dbReference>
<dbReference type="FunFam" id="3.40.50.300:FF:000004">
    <property type="entry name" value="ATP synthase subunit beta"/>
    <property type="match status" value="1"/>
</dbReference>
<dbReference type="Gene3D" id="2.40.10.170">
    <property type="match status" value="1"/>
</dbReference>
<dbReference type="Gene3D" id="1.10.1140.10">
    <property type="entry name" value="Bovine Mitochondrial F1-atpase, Atp Synthase Beta Chain, Chain D, domain 3"/>
    <property type="match status" value="1"/>
</dbReference>
<dbReference type="Gene3D" id="3.40.50.300">
    <property type="entry name" value="P-loop containing nucleotide triphosphate hydrolases"/>
    <property type="match status" value="1"/>
</dbReference>
<dbReference type="HAMAP" id="MF_01347">
    <property type="entry name" value="ATP_synth_beta_bact"/>
    <property type="match status" value="1"/>
</dbReference>
<dbReference type="InterPro" id="IPR003593">
    <property type="entry name" value="AAA+_ATPase"/>
</dbReference>
<dbReference type="InterPro" id="IPR055190">
    <property type="entry name" value="ATP-synt_VA_C"/>
</dbReference>
<dbReference type="InterPro" id="IPR005722">
    <property type="entry name" value="ATP_synth_F1_bsu"/>
</dbReference>
<dbReference type="InterPro" id="IPR020003">
    <property type="entry name" value="ATPase_a/bsu_AS"/>
</dbReference>
<dbReference type="InterPro" id="IPR050053">
    <property type="entry name" value="ATPase_alpha/beta_chains"/>
</dbReference>
<dbReference type="InterPro" id="IPR004100">
    <property type="entry name" value="ATPase_F1/V1/A1_a/bsu_N"/>
</dbReference>
<dbReference type="InterPro" id="IPR036121">
    <property type="entry name" value="ATPase_F1/V1/A1_a/bsu_N_sf"/>
</dbReference>
<dbReference type="InterPro" id="IPR000194">
    <property type="entry name" value="ATPase_F1/V1/A1_a/bsu_nucl-bd"/>
</dbReference>
<dbReference type="InterPro" id="IPR024034">
    <property type="entry name" value="ATPase_F1/V1_b/a_C"/>
</dbReference>
<dbReference type="InterPro" id="IPR027417">
    <property type="entry name" value="P-loop_NTPase"/>
</dbReference>
<dbReference type="NCBIfam" id="TIGR01039">
    <property type="entry name" value="atpD"/>
    <property type="match status" value="1"/>
</dbReference>
<dbReference type="PANTHER" id="PTHR15184">
    <property type="entry name" value="ATP SYNTHASE"/>
    <property type="match status" value="1"/>
</dbReference>
<dbReference type="PANTHER" id="PTHR15184:SF71">
    <property type="entry name" value="ATP SYNTHASE SUBUNIT BETA, MITOCHONDRIAL"/>
    <property type="match status" value="1"/>
</dbReference>
<dbReference type="Pfam" id="PF00006">
    <property type="entry name" value="ATP-synt_ab"/>
    <property type="match status" value="1"/>
</dbReference>
<dbReference type="Pfam" id="PF02874">
    <property type="entry name" value="ATP-synt_ab_N"/>
    <property type="match status" value="1"/>
</dbReference>
<dbReference type="Pfam" id="PF22919">
    <property type="entry name" value="ATP-synt_VA_C"/>
    <property type="match status" value="1"/>
</dbReference>
<dbReference type="SMART" id="SM00382">
    <property type="entry name" value="AAA"/>
    <property type="match status" value="1"/>
</dbReference>
<dbReference type="SUPFAM" id="SSF47917">
    <property type="entry name" value="C-terminal domain of alpha and beta subunits of F1 ATP synthase"/>
    <property type="match status" value="1"/>
</dbReference>
<dbReference type="SUPFAM" id="SSF50615">
    <property type="entry name" value="N-terminal domain of alpha and beta subunits of F1 ATP synthase"/>
    <property type="match status" value="1"/>
</dbReference>
<dbReference type="SUPFAM" id="SSF52540">
    <property type="entry name" value="P-loop containing nucleoside triphosphate hydrolases"/>
    <property type="match status" value="1"/>
</dbReference>
<dbReference type="PROSITE" id="PS00152">
    <property type="entry name" value="ATPASE_ALPHA_BETA"/>
    <property type="match status" value="1"/>
</dbReference>
<organism>
    <name type="scientific">Corynebacterium efficiens (strain DSM 44549 / YS-314 / AJ 12310 / JCM 11189 / NBRC 100395)</name>
    <dbReference type="NCBI Taxonomy" id="196164"/>
    <lineage>
        <taxon>Bacteria</taxon>
        <taxon>Bacillati</taxon>
        <taxon>Actinomycetota</taxon>
        <taxon>Actinomycetes</taxon>
        <taxon>Mycobacteriales</taxon>
        <taxon>Corynebacteriaceae</taxon>
        <taxon>Corynebacterium</taxon>
    </lineage>
</organism>
<proteinExistence type="inferred from homology"/>
<feature type="chain" id="PRO_0000254245" description="ATP synthase subunit beta">
    <location>
        <begin position="1"/>
        <end position="481"/>
    </location>
</feature>
<feature type="binding site" evidence="1">
    <location>
        <begin position="167"/>
        <end position="174"/>
    </location>
    <ligand>
        <name>ATP</name>
        <dbReference type="ChEBI" id="CHEBI:30616"/>
    </ligand>
</feature>
<comment type="function">
    <text evidence="1">Produces ATP from ADP in the presence of a proton gradient across the membrane. The catalytic sites are hosted primarily by the beta subunits.</text>
</comment>
<comment type="catalytic activity">
    <reaction evidence="1">
        <text>ATP + H2O + 4 H(+)(in) = ADP + phosphate + 5 H(+)(out)</text>
        <dbReference type="Rhea" id="RHEA:57720"/>
        <dbReference type="ChEBI" id="CHEBI:15377"/>
        <dbReference type="ChEBI" id="CHEBI:15378"/>
        <dbReference type="ChEBI" id="CHEBI:30616"/>
        <dbReference type="ChEBI" id="CHEBI:43474"/>
        <dbReference type="ChEBI" id="CHEBI:456216"/>
        <dbReference type="EC" id="7.1.2.2"/>
    </reaction>
</comment>
<comment type="subunit">
    <text evidence="1">F-type ATPases have 2 components, CF(1) - the catalytic core - and CF(0) - the membrane proton channel. CF(1) has five subunits: alpha(3), beta(3), gamma(1), delta(1), epsilon(1). CF(0) has three main subunits: a(1), b(2) and c(9-12). The alpha and beta chains form an alternating ring which encloses part of the gamma chain. CF(1) is attached to CF(0) by a central stalk formed by the gamma and epsilon chains, while a peripheral stalk is formed by the delta and b chains.</text>
</comment>
<comment type="subcellular location">
    <subcellularLocation>
        <location evidence="1">Cell membrane</location>
        <topology evidence="1">Peripheral membrane protein</topology>
    </subcellularLocation>
</comment>
<comment type="similarity">
    <text evidence="1">Belongs to the ATPase alpha/beta chains family.</text>
</comment>
<name>ATPB_COREF</name>
<evidence type="ECO:0000255" key="1">
    <source>
        <dbReference type="HAMAP-Rule" id="MF_01347"/>
    </source>
</evidence>